<name>VPS52_RAT</name>
<organism>
    <name type="scientific">Rattus norvegicus</name>
    <name type="common">Rat</name>
    <dbReference type="NCBI Taxonomy" id="10116"/>
    <lineage>
        <taxon>Eukaryota</taxon>
        <taxon>Metazoa</taxon>
        <taxon>Chordata</taxon>
        <taxon>Craniata</taxon>
        <taxon>Vertebrata</taxon>
        <taxon>Euteleostomi</taxon>
        <taxon>Mammalia</taxon>
        <taxon>Eutheria</taxon>
        <taxon>Euarchontoglires</taxon>
        <taxon>Glires</taxon>
        <taxon>Rodentia</taxon>
        <taxon>Myomorpha</taxon>
        <taxon>Muroidea</taxon>
        <taxon>Muridae</taxon>
        <taxon>Murinae</taxon>
        <taxon>Rattus</taxon>
    </lineage>
</organism>
<keyword id="KW-0007">Acetylation</keyword>
<keyword id="KW-0175">Coiled coil</keyword>
<keyword id="KW-0967">Endosome</keyword>
<keyword id="KW-0333">Golgi apparatus</keyword>
<keyword id="KW-0472">Membrane</keyword>
<keyword id="KW-0597">Phosphoprotein</keyword>
<keyword id="KW-0653">Protein transport</keyword>
<keyword id="KW-1185">Reference proteome</keyword>
<keyword id="KW-0813">Transport</keyword>
<sequence>MAAAATMAAAARELVLRAGASDMEEEEGPLGAGSGLQEPLQLGELDITSDEFILDEVDVHIQANLEDELVKEALKTGVDLRHYSKQVELELQQIEQKSIRDYIQESENIASLHNQITACDAVLERMEQMLGAFQSDLSSISCEIRTLQEQSGAMNIRLRNRQAVRGKLGELVDGLVVPSALVTAILEAPVTEPRFLEQLQELDAKAAAVREQEARGTAACADVRGVLDRLRVKAVTKIREFILQKIYSFRKPMTNYQIPQTALLKYRFFYQFLLGNERATAKEVRDEYVETLSKIYLSYYRSYVGRLMKVQYEEVAEKDDLMGVEDTAKKGFFSKPSLRSRNTIFTLGTRGAVISPAELEAPILVPHTAQRGEQRYPFEALFRSQHYALLDNSCREYLFICEFFVVSGPAAHDLFHAVMGRTLSMTLKHLESYLADCYDAIAVFLCIHIVLRFRNIAAKRDVPALDRYWEQVLALLWPRFELILEMNVQSVRSTDPQRLGGLDTRPHYITRRYAEFSSALVSINQTIPNERTLQLLGQLQVEVENFVLRVAAEFSSRKEQLVFLINNYDMMLGVLMERAADDSKEVESFQQLLNARTQEFIEELLSPPFGGLVAFVKEAEALIERGQAERLRGEEARVTQLIRGFGSSWKASVESLSQDVMRSFTNFRNGTSIIQGALTQLIQLYHRFHRVLSQPQLRALPARAELINIHHLMVELKKHKPNF</sequence>
<evidence type="ECO:0000250" key="1">
    <source>
        <dbReference type="UniProtKB" id="Q8N1B4"/>
    </source>
</evidence>
<evidence type="ECO:0000255" key="2"/>
<evidence type="ECO:0000269" key="3">
    <source>
    </source>
</evidence>
<evidence type="ECO:0000269" key="4">
    <source>
    </source>
</evidence>
<evidence type="ECO:0000305" key="5"/>
<gene>
    <name type="primary">Vps52</name>
    <name type="synonym">Are1</name>
    <name type="synonym">Sacm2l</name>
</gene>
<accession>O55166</accession>
<protein>
    <recommendedName>
        <fullName>Vacuolar protein sorting-associated protein 52 homolog</fullName>
    </recommendedName>
    <alternativeName>
        <fullName>SAC2 suppressor of actin mutations 2-like protein</fullName>
    </alternativeName>
</protein>
<feature type="initiator methionine" description="Removed" evidence="1">
    <location>
        <position position="1"/>
    </location>
</feature>
<feature type="chain" id="PRO_0000213317" description="Vacuolar protein sorting-associated protein 52 homolog">
    <location>
        <begin position="2"/>
        <end position="723"/>
    </location>
</feature>
<feature type="coiled-coil region" evidence="2">
    <location>
        <begin position="107"/>
        <end position="127"/>
    </location>
</feature>
<feature type="coiled-coil region" evidence="2">
    <location>
        <begin position="194"/>
        <end position="215"/>
    </location>
</feature>
<feature type="modified residue" description="N-acetylalanine" evidence="1">
    <location>
        <position position="2"/>
    </location>
</feature>
<feature type="modified residue" description="Phosphoserine" evidence="1">
    <location>
        <position position="355"/>
    </location>
</feature>
<reference key="1">
    <citation type="journal article" date="1998" name="Genomics">
        <title>Identification of a novel highly conserved gene in the centromeric part of the major histocompatibility complex.</title>
        <authorList>
            <person name="Walter L."/>
            <person name="Guenther E."/>
        </authorList>
    </citation>
    <scope>NUCLEOTIDE SEQUENCE [MRNA]</scope>
    <source>
        <strain>LEW.1W/GUN</strain>
    </source>
</reference>
<reference key="2">
    <citation type="journal article" date="2004" name="Genome Res.">
        <title>The genomic sequence and comparative analysis of the rat major histocompatibility complex.</title>
        <authorList>
            <person name="Hurt P."/>
            <person name="Walter L."/>
            <person name="Sudbrak R."/>
            <person name="Klages S."/>
            <person name="Mueller I."/>
            <person name="Shiina T."/>
            <person name="Inoko H."/>
            <person name="Lehrach H."/>
            <person name="Guenther E."/>
            <person name="Reinhardt R."/>
            <person name="Himmelbauer H."/>
        </authorList>
    </citation>
    <scope>NUCLEOTIDE SEQUENCE [LARGE SCALE GENOMIC DNA]</scope>
    <scope>TISSUE SPECIFICITY</scope>
    <source>
        <strain>Brown Norway</strain>
    </source>
</reference>
<reference key="3">
    <citation type="journal article" date="2016" name="Mol. Biol. Cell">
        <title>TSSC1 is novel component of the endosomal retrieval machinery.</title>
        <authorList>
            <person name="Gershlick D.C."/>
            <person name="Schindler C."/>
            <person name="Chen Y."/>
            <person name="Bonifacino J.S."/>
        </authorList>
    </citation>
    <scope>INTERACTION WITH EIPR1</scope>
</reference>
<proteinExistence type="evidence at protein level"/>
<comment type="function">
    <text evidence="1">Acts as a component of the GARP complex that is involved in retrograde transport from early and late endosomes to the trans-Golgi network (TGN). The GARP complex is required for the maintenance of the cycling of mannose 6-phosphate receptors between the TGN and endosomes, this cycling is necessary for proper lysosomal sorting of acid hydrolases such as CTSD. Acts as a component of the EARP complex that is involved in endocytic recycling. The EARP complex associates with Rab4-positive endosomes and promotes recycling of internalized transferrin receptor (TFRC) to the plasma membrane.</text>
</comment>
<comment type="subunit">
    <text evidence="1 4">Component of the Golgi-associated retrograde protein (GARP) complex, also called VFT (VPS fifty-three) complex, composed of VPS51, VPS52, VPS53 and VPS54. Component of the endosome-associated retrograde protein (EARP) complex, composed of VPS51, VPS52, VPS53 and VPS50/Syndetin (By similarity). The EARP complex interacts with EIPR1 (PubMed:27440922). EIPR1 interacts with GARP complex and mediates its recruitment to the trans-Golgi network. Interacts with RAB6A and STX10. Interacts with BLTP3B (By similarity).</text>
</comment>
<comment type="subcellular location">
    <subcellularLocation>
        <location evidence="1">Golgi apparatus</location>
        <location evidence="1">trans-Golgi network membrane</location>
        <topology evidence="1">Peripheral membrane protein</topology>
    </subcellularLocation>
    <subcellularLocation>
        <location evidence="1">Endosome membrane</location>
        <topology evidence="1">Peripheral membrane protein</topology>
    </subcellularLocation>
    <subcellularLocation>
        <location evidence="1">Recycling endosome</location>
    </subcellularLocation>
    <text evidence="1">Localizes to the trans-Golgi network as part of the GARP complex, while it localizes to recycling endosomes as part of the EARP complex.</text>
</comment>
<comment type="tissue specificity">
    <text evidence="3">Ubiquitous.</text>
</comment>
<comment type="similarity">
    <text evidence="5">Belongs to the VPS52 family.</text>
</comment>
<dbReference type="EMBL" id="AJ223830">
    <property type="protein sequence ID" value="CAA11566.1"/>
    <property type="molecule type" value="mRNA"/>
</dbReference>
<dbReference type="EMBL" id="BX883042">
    <property type="protein sequence ID" value="CAE83926.1"/>
    <property type="molecule type" value="Genomic_DNA"/>
</dbReference>
<dbReference type="RefSeq" id="NP_149088.1">
    <property type="nucleotide sequence ID" value="NM_033097.2"/>
</dbReference>
<dbReference type="SMR" id="O55166"/>
<dbReference type="BioGRID" id="247260">
    <property type="interactions" value="2"/>
</dbReference>
<dbReference type="DIP" id="DIP-61630N"/>
<dbReference type="FunCoup" id="O55166">
    <property type="interactions" value="3671"/>
</dbReference>
<dbReference type="IntAct" id="O55166">
    <property type="interactions" value="1"/>
</dbReference>
<dbReference type="STRING" id="10116.ENSRNOP00000000549"/>
<dbReference type="PhosphoSitePlus" id="O55166"/>
<dbReference type="jPOST" id="O55166"/>
<dbReference type="PaxDb" id="10116-ENSRNOP00000000549"/>
<dbReference type="Ensembl" id="ENSRNOT00000000549.6">
    <property type="protein sequence ID" value="ENSRNOP00000000549.3"/>
    <property type="gene ID" value="ENSRNOG00000000470.8"/>
</dbReference>
<dbReference type="GeneID" id="25218"/>
<dbReference type="KEGG" id="rno:25218"/>
<dbReference type="UCSC" id="RGD:3618">
    <property type="organism name" value="rat"/>
</dbReference>
<dbReference type="AGR" id="RGD:3618"/>
<dbReference type="CTD" id="6293"/>
<dbReference type="RGD" id="3618">
    <property type="gene designation" value="Vps52"/>
</dbReference>
<dbReference type="eggNOG" id="KOG1961">
    <property type="taxonomic scope" value="Eukaryota"/>
</dbReference>
<dbReference type="GeneTree" id="ENSGT00390000008815"/>
<dbReference type="HOGENOM" id="CLU_010797_0_0_1"/>
<dbReference type="InParanoid" id="O55166"/>
<dbReference type="OMA" id="IHVVMVE"/>
<dbReference type="OrthoDB" id="19482at2759"/>
<dbReference type="PhylomeDB" id="O55166"/>
<dbReference type="TreeFam" id="TF314937"/>
<dbReference type="Reactome" id="R-RNO-6811440">
    <property type="pathway name" value="Retrograde transport at the Trans-Golgi-Network"/>
</dbReference>
<dbReference type="PRO" id="PR:O55166"/>
<dbReference type="Proteomes" id="UP000002494">
    <property type="component" value="Chromosome 20"/>
</dbReference>
<dbReference type="Bgee" id="ENSRNOG00000000470">
    <property type="expression patterns" value="Expressed in frontal cortex and 20 other cell types or tissues"/>
</dbReference>
<dbReference type="ExpressionAtlas" id="O55166">
    <property type="expression patterns" value="baseline and differential"/>
</dbReference>
<dbReference type="GO" id="GO:0005829">
    <property type="term" value="C:cytosol"/>
    <property type="evidence" value="ECO:0007669"/>
    <property type="project" value="GOC"/>
</dbReference>
<dbReference type="GO" id="GO:1990745">
    <property type="term" value="C:EARP complex"/>
    <property type="evidence" value="ECO:0000250"/>
    <property type="project" value="UniProtKB"/>
</dbReference>
<dbReference type="GO" id="GO:0010008">
    <property type="term" value="C:endosome membrane"/>
    <property type="evidence" value="ECO:0007669"/>
    <property type="project" value="UniProtKB-SubCell"/>
</dbReference>
<dbReference type="GO" id="GO:0000938">
    <property type="term" value="C:GARP complex"/>
    <property type="evidence" value="ECO:0000266"/>
    <property type="project" value="RGD"/>
</dbReference>
<dbReference type="GO" id="GO:0005794">
    <property type="term" value="C:Golgi apparatus"/>
    <property type="evidence" value="ECO:0000266"/>
    <property type="project" value="RGD"/>
</dbReference>
<dbReference type="GO" id="GO:0016020">
    <property type="term" value="C:membrane"/>
    <property type="evidence" value="ECO:0000266"/>
    <property type="project" value="RGD"/>
</dbReference>
<dbReference type="GO" id="GO:0048471">
    <property type="term" value="C:perinuclear region of cytoplasm"/>
    <property type="evidence" value="ECO:0000266"/>
    <property type="project" value="RGD"/>
</dbReference>
<dbReference type="GO" id="GO:0098794">
    <property type="term" value="C:postsynapse"/>
    <property type="evidence" value="ECO:0000266"/>
    <property type="project" value="RGD"/>
</dbReference>
<dbReference type="GO" id="GO:0098793">
    <property type="term" value="C:presynapse"/>
    <property type="evidence" value="ECO:0000266"/>
    <property type="project" value="RGD"/>
</dbReference>
<dbReference type="GO" id="GO:0055037">
    <property type="term" value="C:recycling endosome"/>
    <property type="evidence" value="ECO:0000250"/>
    <property type="project" value="UniProtKB"/>
</dbReference>
<dbReference type="GO" id="GO:0019905">
    <property type="term" value="F:syntaxin binding"/>
    <property type="evidence" value="ECO:0000266"/>
    <property type="project" value="RGD"/>
</dbReference>
<dbReference type="GO" id="GO:0010668">
    <property type="term" value="P:ectodermal cell differentiation"/>
    <property type="evidence" value="ECO:0000266"/>
    <property type="project" value="RGD"/>
</dbReference>
<dbReference type="GO" id="GO:0048611">
    <property type="term" value="P:embryonic ectodermal digestive tract development"/>
    <property type="evidence" value="ECO:0000266"/>
    <property type="project" value="RGD"/>
</dbReference>
<dbReference type="GO" id="GO:0032456">
    <property type="term" value="P:endocytic recycling"/>
    <property type="evidence" value="ECO:0000250"/>
    <property type="project" value="UniProtKB"/>
</dbReference>
<dbReference type="GO" id="GO:0006896">
    <property type="term" value="P:Golgi to vacuole transport"/>
    <property type="evidence" value="ECO:0000318"/>
    <property type="project" value="GO_Central"/>
</dbReference>
<dbReference type="GO" id="GO:0007041">
    <property type="term" value="P:lysosomal transport"/>
    <property type="evidence" value="ECO:0000266"/>
    <property type="project" value="RGD"/>
</dbReference>
<dbReference type="GO" id="GO:0006605">
    <property type="term" value="P:protein targeting"/>
    <property type="evidence" value="ECO:0000266"/>
    <property type="project" value="RGD"/>
</dbReference>
<dbReference type="GO" id="GO:0015031">
    <property type="term" value="P:protein transport"/>
    <property type="evidence" value="ECO:0007669"/>
    <property type="project" value="UniProtKB-KW"/>
</dbReference>
<dbReference type="GO" id="GO:0042147">
    <property type="term" value="P:retrograde transport, endosome to Golgi"/>
    <property type="evidence" value="ECO:0000318"/>
    <property type="project" value="GO_Central"/>
</dbReference>
<dbReference type="GO" id="GO:0090119">
    <property type="term" value="P:vesicle-mediated cholesterol transport"/>
    <property type="evidence" value="ECO:0000266"/>
    <property type="project" value="RGD"/>
</dbReference>
<dbReference type="InterPro" id="IPR007258">
    <property type="entry name" value="Vps52"/>
</dbReference>
<dbReference type="InterPro" id="IPR048361">
    <property type="entry name" value="Vps52_C"/>
</dbReference>
<dbReference type="InterPro" id="IPR048319">
    <property type="entry name" value="Vps52_CC"/>
</dbReference>
<dbReference type="PANTHER" id="PTHR14190">
    <property type="entry name" value="SUPPRESSOR OF ACTIN MUTATIONS 2/VACUOLAR PROTEIN SORTING 52"/>
    <property type="match status" value="1"/>
</dbReference>
<dbReference type="PANTHER" id="PTHR14190:SF7">
    <property type="entry name" value="VACUOLAR PROTEIN SORTING-ASSOCIATED PROTEIN 52 HOMOLOG"/>
    <property type="match status" value="1"/>
</dbReference>
<dbReference type="Pfam" id="PF20655">
    <property type="entry name" value="Vps52_C"/>
    <property type="match status" value="1"/>
</dbReference>
<dbReference type="Pfam" id="PF04129">
    <property type="entry name" value="Vps52_CC"/>
    <property type="match status" value="1"/>
</dbReference>